<accession>Q9M130</accession>
<accession>O81326</accession>
<gene>
    <name type="ordered locus">At4g01440</name>
    <name type="ORF">F3D13.3</name>
</gene>
<comment type="subcellular location">
    <subcellularLocation>
        <location evidence="1">Membrane</location>
        <topology evidence="3">Multi-pass membrane protein</topology>
    </subcellularLocation>
</comment>
<comment type="similarity">
    <text evidence="3">Belongs to the drug/metabolite transporter (DMT) superfamily. Plant drug/metabolite exporter (P-DME) (TC 2.A.7.4) family.</text>
</comment>
<comment type="sequence caution" evidence="3">
    <conflict type="erroneous gene model prediction">
        <sequence resource="EMBL-CDS" id="AAC19291"/>
    </conflict>
</comment>
<proteinExistence type="evidence at transcript level"/>
<keyword id="KW-0472">Membrane</keyword>
<keyword id="KW-1185">Reference proteome</keyword>
<keyword id="KW-0677">Repeat</keyword>
<keyword id="KW-0812">Transmembrane</keyword>
<keyword id="KW-1133">Transmembrane helix</keyword>
<dbReference type="EMBL" id="AF069300">
    <property type="protein sequence ID" value="AAC19291.1"/>
    <property type="status" value="ALT_SEQ"/>
    <property type="molecule type" value="Genomic_DNA"/>
</dbReference>
<dbReference type="EMBL" id="AL161492">
    <property type="protein sequence ID" value="CAB77714.1"/>
    <property type="molecule type" value="Genomic_DNA"/>
</dbReference>
<dbReference type="EMBL" id="CP002687">
    <property type="protein sequence ID" value="AEE82026.1"/>
    <property type="molecule type" value="Genomic_DNA"/>
</dbReference>
<dbReference type="EMBL" id="AY088033">
    <property type="protein sequence ID" value="AAM65579.1"/>
    <property type="molecule type" value="mRNA"/>
</dbReference>
<dbReference type="PIR" id="G85018">
    <property type="entry name" value="G85018"/>
</dbReference>
<dbReference type="PIR" id="T01373">
    <property type="entry name" value="T01373"/>
</dbReference>
<dbReference type="RefSeq" id="NP_192053.1">
    <property type="nucleotide sequence ID" value="NM_116374.2"/>
</dbReference>
<dbReference type="SMR" id="Q9M130"/>
<dbReference type="STRING" id="3702.Q9M130"/>
<dbReference type="iPTMnet" id="Q9M130"/>
<dbReference type="PaxDb" id="3702-AT4G01440.1"/>
<dbReference type="EnsemblPlants" id="AT4G01440.1">
    <property type="protein sequence ID" value="AT4G01440.1"/>
    <property type="gene ID" value="AT4G01440"/>
</dbReference>
<dbReference type="GeneID" id="826697"/>
<dbReference type="Gramene" id="AT4G01440.1">
    <property type="protein sequence ID" value="AT4G01440.1"/>
    <property type="gene ID" value="AT4G01440"/>
</dbReference>
<dbReference type="KEGG" id="ath:AT4G01440"/>
<dbReference type="Araport" id="AT4G01440"/>
<dbReference type="TAIR" id="AT4G01440">
    <property type="gene designation" value="UMAMIT31"/>
</dbReference>
<dbReference type="eggNOG" id="ENOG502QWIP">
    <property type="taxonomic scope" value="Eukaryota"/>
</dbReference>
<dbReference type="HOGENOM" id="CLU_025359_1_0_1"/>
<dbReference type="InParanoid" id="Q9M130"/>
<dbReference type="OMA" id="LTFRIIC"/>
<dbReference type="OrthoDB" id="1728340at2759"/>
<dbReference type="PhylomeDB" id="Q9M130"/>
<dbReference type="PRO" id="PR:Q9M130"/>
<dbReference type="Proteomes" id="UP000006548">
    <property type="component" value="Chromosome 4"/>
</dbReference>
<dbReference type="ExpressionAtlas" id="Q9M130">
    <property type="expression patterns" value="baseline and differential"/>
</dbReference>
<dbReference type="GO" id="GO:0016020">
    <property type="term" value="C:membrane"/>
    <property type="evidence" value="ECO:0007669"/>
    <property type="project" value="UniProtKB-SubCell"/>
</dbReference>
<dbReference type="GO" id="GO:0022857">
    <property type="term" value="F:transmembrane transporter activity"/>
    <property type="evidence" value="ECO:0007669"/>
    <property type="project" value="InterPro"/>
</dbReference>
<dbReference type="InterPro" id="IPR000620">
    <property type="entry name" value="EamA_dom"/>
</dbReference>
<dbReference type="InterPro" id="IPR030184">
    <property type="entry name" value="WAT1-related"/>
</dbReference>
<dbReference type="PANTHER" id="PTHR31218">
    <property type="entry name" value="WAT1-RELATED PROTEIN"/>
    <property type="match status" value="1"/>
</dbReference>
<dbReference type="Pfam" id="PF00892">
    <property type="entry name" value="EamA"/>
    <property type="match status" value="2"/>
</dbReference>
<dbReference type="SUPFAM" id="SSF103481">
    <property type="entry name" value="Multidrug resistance efflux transporter EmrE"/>
    <property type="match status" value="2"/>
</dbReference>
<name>WTR29_ARATH</name>
<protein>
    <recommendedName>
        <fullName>WAT1-related protein At4g01440</fullName>
    </recommendedName>
</protein>
<organism>
    <name type="scientific">Arabidopsis thaliana</name>
    <name type="common">Mouse-ear cress</name>
    <dbReference type="NCBI Taxonomy" id="3702"/>
    <lineage>
        <taxon>Eukaryota</taxon>
        <taxon>Viridiplantae</taxon>
        <taxon>Streptophyta</taxon>
        <taxon>Embryophyta</taxon>
        <taxon>Tracheophyta</taxon>
        <taxon>Spermatophyta</taxon>
        <taxon>Magnoliopsida</taxon>
        <taxon>eudicotyledons</taxon>
        <taxon>Gunneridae</taxon>
        <taxon>Pentapetalae</taxon>
        <taxon>rosids</taxon>
        <taxon>malvids</taxon>
        <taxon>Brassicales</taxon>
        <taxon>Brassicaceae</taxon>
        <taxon>Camelineae</taxon>
        <taxon>Arabidopsis</taxon>
    </lineage>
</organism>
<evidence type="ECO:0000250" key="1"/>
<evidence type="ECO:0000255" key="2"/>
<evidence type="ECO:0000305" key="3"/>
<feature type="chain" id="PRO_0000421337" description="WAT1-related protein At4g01440">
    <location>
        <begin position="1"/>
        <end position="365"/>
    </location>
</feature>
<feature type="transmembrane region" description="Helical" evidence="2">
    <location>
        <begin position="8"/>
        <end position="28"/>
    </location>
</feature>
<feature type="transmembrane region" description="Helical" evidence="2">
    <location>
        <begin position="40"/>
        <end position="60"/>
    </location>
</feature>
<feature type="transmembrane region" description="Helical" evidence="2">
    <location>
        <begin position="72"/>
        <end position="92"/>
    </location>
</feature>
<feature type="transmembrane region" description="Helical" evidence="2">
    <location>
        <begin position="101"/>
        <end position="121"/>
    </location>
</feature>
<feature type="transmembrane region" description="Helical" evidence="2">
    <location>
        <begin position="132"/>
        <end position="152"/>
    </location>
</feature>
<feature type="transmembrane region" description="Helical" evidence="2">
    <location>
        <begin position="181"/>
        <end position="201"/>
    </location>
</feature>
<feature type="transmembrane region" description="Helical" evidence="2">
    <location>
        <begin position="213"/>
        <end position="233"/>
    </location>
</feature>
<feature type="transmembrane region" description="Helical" evidence="2">
    <location>
        <begin position="249"/>
        <end position="269"/>
    </location>
</feature>
<feature type="transmembrane region" description="Helical" evidence="2">
    <location>
        <begin position="277"/>
        <end position="297"/>
    </location>
</feature>
<feature type="transmembrane region" description="Helical" evidence="2">
    <location>
        <begin position="302"/>
        <end position="322"/>
    </location>
</feature>
<feature type="domain" description="EamA 1">
    <location>
        <begin position="25"/>
        <end position="144"/>
    </location>
</feature>
<feature type="domain" description="EamA 2">
    <location>
        <begin position="196"/>
        <end position="321"/>
    </location>
</feature>
<sequence length="365" mass="40443">MGYCDGKWTPVIIMVMINSALGLANALVKKVLDGGVNHMVIATYRLAISTLFLAPIAFFWERKTRPTLTLNILVQLFFSALVGASLTQYFFLLGLSYTSATLACAFISMTPAITFVMALIFRVEKLNMKSKAGMGMVMGALICIGGALLLTMYKGVPLTKLRKLETHQLINNNHAMKPENWIIGCVLLFAGSSCFGSWMLIQAKVNEKYPCQYSSTVVLSFFGTIQCALLSLIKSRDITAWILTDKLDIVTIVYAGAVAQGICTVGTSWCIRKRGPIFTSIFTPVGLIFATLFDFLILHRQIFLGSVVGSGVVIFGLYIFLLGKVRLMKEECEKKLPCRFNEDDQEEDDDEQYKKGHLMVVPMTP</sequence>
<reference key="1">
    <citation type="journal article" date="1999" name="Nature">
        <title>Sequence and analysis of chromosome 4 of the plant Arabidopsis thaliana.</title>
        <authorList>
            <person name="Mayer K.F.X."/>
            <person name="Schueller C."/>
            <person name="Wambutt R."/>
            <person name="Murphy G."/>
            <person name="Volckaert G."/>
            <person name="Pohl T."/>
            <person name="Duesterhoeft A."/>
            <person name="Stiekema W."/>
            <person name="Entian K.-D."/>
            <person name="Terryn N."/>
            <person name="Harris B."/>
            <person name="Ansorge W."/>
            <person name="Brandt P."/>
            <person name="Grivell L.A."/>
            <person name="Rieger M."/>
            <person name="Weichselgartner M."/>
            <person name="de Simone V."/>
            <person name="Obermaier B."/>
            <person name="Mache R."/>
            <person name="Mueller M."/>
            <person name="Kreis M."/>
            <person name="Delseny M."/>
            <person name="Puigdomenech P."/>
            <person name="Watson M."/>
            <person name="Schmidtheini T."/>
            <person name="Reichert B."/>
            <person name="Portetelle D."/>
            <person name="Perez-Alonso M."/>
            <person name="Boutry M."/>
            <person name="Bancroft I."/>
            <person name="Vos P."/>
            <person name="Hoheisel J."/>
            <person name="Zimmermann W."/>
            <person name="Wedler H."/>
            <person name="Ridley P."/>
            <person name="Langham S.-A."/>
            <person name="McCullagh B."/>
            <person name="Bilham L."/>
            <person name="Robben J."/>
            <person name="van der Schueren J."/>
            <person name="Grymonprez B."/>
            <person name="Chuang Y.-J."/>
            <person name="Vandenbussche F."/>
            <person name="Braeken M."/>
            <person name="Weltjens I."/>
            <person name="Voet M."/>
            <person name="Bastiaens I."/>
            <person name="Aert R."/>
            <person name="Defoor E."/>
            <person name="Weitzenegger T."/>
            <person name="Bothe G."/>
            <person name="Ramsperger U."/>
            <person name="Hilbert H."/>
            <person name="Braun M."/>
            <person name="Holzer E."/>
            <person name="Brandt A."/>
            <person name="Peters S."/>
            <person name="van Staveren M."/>
            <person name="Dirkse W."/>
            <person name="Mooijman P."/>
            <person name="Klein Lankhorst R."/>
            <person name="Rose M."/>
            <person name="Hauf J."/>
            <person name="Koetter P."/>
            <person name="Berneiser S."/>
            <person name="Hempel S."/>
            <person name="Feldpausch M."/>
            <person name="Lamberth S."/>
            <person name="Van den Daele H."/>
            <person name="De Keyser A."/>
            <person name="Buysshaert C."/>
            <person name="Gielen J."/>
            <person name="Villarroel R."/>
            <person name="De Clercq R."/>
            <person name="van Montagu M."/>
            <person name="Rogers J."/>
            <person name="Cronin A."/>
            <person name="Quail M.A."/>
            <person name="Bray-Allen S."/>
            <person name="Clark L."/>
            <person name="Doggett J."/>
            <person name="Hall S."/>
            <person name="Kay M."/>
            <person name="Lennard N."/>
            <person name="McLay K."/>
            <person name="Mayes R."/>
            <person name="Pettett A."/>
            <person name="Rajandream M.A."/>
            <person name="Lyne M."/>
            <person name="Benes V."/>
            <person name="Rechmann S."/>
            <person name="Borkova D."/>
            <person name="Bloecker H."/>
            <person name="Scharfe M."/>
            <person name="Grimm M."/>
            <person name="Loehnert T.-H."/>
            <person name="Dose S."/>
            <person name="de Haan M."/>
            <person name="Maarse A.C."/>
            <person name="Schaefer M."/>
            <person name="Mueller-Auer S."/>
            <person name="Gabel C."/>
            <person name="Fuchs M."/>
            <person name="Fartmann B."/>
            <person name="Granderath K."/>
            <person name="Dauner D."/>
            <person name="Herzl A."/>
            <person name="Neumann S."/>
            <person name="Argiriou A."/>
            <person name="Vitale D."/>
            <person name="Liguori R."/>
            <person name="Piravandi E."/>
            <person name="Massenet O."/>
            <person name="Quigley F."/>
            <person name="Clabauld G."/>
            <person name="Muendlein A."/>
            <person name="Felber R."/>
            <person name="Schnabl S."/>
            <person name="Hiller R."/>
            <person name="Schmidt W."/>
            <person name="Lecharny A."/>
            <person name="Aubourg S."/>
            <person name="Chefdor F."/>
            <person name="Cooke R."/>
            <person name="Berger C."/>
            <person name="Monfort A."/>
            <person name="Casacuberta E."/>
            <person name="Gibbons T."/>
            <person name="Weber N."/>
            <person name="Vandenbol M."/>
            <person name="Bargues M."/>
            <person name="Terol J."/>
            <person name="Torres A."/>
            <person name="Perez-Perez A."/>
            <person name="Purnelle B."/>
            <person name="Bent E."/>
            <person name="Johnson S."/>
            <person name="Tacon D."/>
            <person name="Jesse T."/>
            <person name="Heijnen L."/>
            <person name="Schwarz S."/>
            <person name="Scholler P."/>
            <person name="Heber S."/>
            <person name="Francs P."/>
            <person name="Bielke C."/>
            <person name="Frishman D."/>
            <person name="Haase D."/>
            <person name="Lemcke K."/>
            <person name="Mewes H.-W."/>
            <person name="Stocker S."/>
            <person name="Zaccaria P."/>
            <person name="Bevan M."/>
            <person name="Wilson R.K."/>
            <person name="de la Bastide M."/>
            <person name="Habermann K."/>
            <person name="Parnell L."/>
            <person name="Dedhia N."/>
            <person name="Gnoj L."/>
            <person name="Schutz K."/>
            <person name="Huang E."/>
            <person name="Spiegel L."/>
            <person name="Sekhon M."/>
            <person name="Murray J."/>
            <person name="Sheet P."/>
            <person name="Cordes M."/>
            <person name="Abu-Threideh J."/>
            <person name="Stoneking T."/>
            <person name="Kalicki J."/>
            <person name="Graves T."/>
            <person name="Harmon G."/>
            <person name="Edwards J."/>
            <person name="Latreille P."/>
            <person name="Courtney L."/>
            <person name="Cloud J."/>
            <person name="Abbott A."/>
            <person name="Scott K."/>
            <person name="Johnson D."/>
            <person name="Minx P."/>
            <person name="Bentley D."/>
            <person name="Fulton B."/>
            <person name="Miller N."/>
            <person name="Greco T."/>
            <person name="Kemp K."/>
            <person name="Kramer J."/>
            <person name="Fulton L."/>
            <person name="Mardis E."/>
            <person name="Dante M."/>
            <person name="Pepin K."/>
            <person name="Hillier L.W."/>
            <person name="Nelson J."/>
            <person name="Spieth J."/>
            <person name="Ryan E."/>
            <person name="Andrews S."/>
            <person name="Geisel C."/>
            <person name="Layman D."/>
            <person name="Du H."/>
            <person name="Ali J."/>
            <person name="Berghoff A."/>
            <person name="Jones K."/>
            <person name="Drone K."/>
            <person name="Cotton M."/>
            <person name="Joshu C."/>
            <person name="Antonoiu B."/>
            <person name="Zidanic M."/>
            <person name="Strong C."/>
            <person name="Sun H."/>
            <person name="Lamar B."/>
            <person name="Yordan C."/>
            <person name="Ma P."/>
            <person name="Zhong J."/>
            <person name="Preston R."/>
            <person name="Vil D."/>
            <person name="Shekher M."/>
            <person name="Matero A."/>
            <person name="Shah R."/>
            <person name="Swaby I.K."/>
            <person name="O'Shaughnessy A."/>
            <person name="Rodriguez M."/>
            <person name="Hoffman J."/>
            <person name="Till S."/>
            <person name="Granat S."/>
            <person name="Shohdy N."/>
            <person name="Hasegawa A."/>
            <person name="Hameed A."/>
            <person name="Lodhi M."/>
            <person name="Johnson A."/>
            <person name="Chen E."/>
            <person name="Marra M.A."/>
            <person name="Martienssen R."/>
            <person name="McCombie W.R."/>
        </authorList>
    </citation>
    <scope>NUCLEOTIDE SEQUENCE [LARGE SCALE GENOMIC DNA]</scope>
    <source>
        <strain>cv. Columbia</strain>
    </source>
</reference>
<reference key="2">
    <citation type="journal article" date="2017" name="Plant J.">
        <title>Araport11: a complete reannotation of the Arabidopsis thaliana reference genome.</title>
        <authorList>
            <person name="Cheng C.Y."/>
            <person name="Krishnakumar V."/>
            <person name="Chan A.P."/>
            <person name="Thibaud-Nissen F."/>
            <person name="Schobel S."/>
            <person name="Town C.D."/>
        </authorList>
    </citation>
    <scope>GENOME REANNOTATION</scope>
    <source>
        <strain>cv. Columbia</strain>
    </source>
</reference>
<reference key="3">
    <citation type="submission" date="2002-03" db="EMBL/GenBank/DDBJ databases">
        <title>Full-length cDNA from Arabidopsis thaliana.</title>
        <authorList>
            <person name="Brover V.V."/>
            <person name="Troukhan M.E."/>
            <person name="Alexandrov N.A."/>
            <person name="Lu Y.-P."/>
            <person name="Flavell R.B."/>
            <person name="Feldmann K.A."/>
        </authorList>
    </citation>
    <scope>NUCLEOTIDE SEQUENCE [LARGE SCALE MRNA]</scope>
</reference>